<evidence type="ECO:0000250" key="1">
    <source>
        <dbReference type="UniProtKB" id="O00567"/>
    </source>
</evidence>
<evidence type="ECO:0000250" key="2">
    <source>
        <dbReference type="UniProtKB" id="Q9D6Z1"/>
    </source>
</evidence>
<evidence type="ECO:0000255" key="3">
    <source>
        <dbReference type="PROSITE-ProRule" id="PRU00690"/>
    </source>
</evidence>
<evidence type="ECO:0000256" key="4">
    <source>
        <dbReference type="SAM" id="MobiDB-lite"/>
    </source>
</evidence>
<evidence type="ECO:0000305" key="5"/>
<reference key="1">
    <citation type="submission" date="2004-11" db="EMBL/GenBank/DDBJ databases">
        <authorList>
            <consortium name="The German cDNA consortium"/>
        </authorList>
    </citation>
    <scope>NUCLEOTIDE SEQUENCE [LARGE SCALE MRNA]</scope>
    <source>
        <tissue>Brain cortex</tissue>
    </source>
</reference>
<name>NOP56_PONAB</name>
<organism>
    <name type="scientific">Pongo abelii</name>
    <name type="common">Sumatran orangutan</name>
    <name type="synonym">Pongo pygmaeus abelii</name>
    <dbReference type="NCBI Taxonomy" id="9601"/>
    <lineage>
        <taxon>Eukaryota</taxon>
        <taxon>Metazoa</taxon>
        <taxon>Chordata</taxon>
        <taxon>Craniata</taxon>
        <taxon>Vertebrata</taxon>
        <taxon>Euteleostomi</taxon>
        <taxon>Mammalia</taxon>
        <taxon>Eutheria</taxon>
        <taxon>Euarchontoglires</taxon>
        <taxon>Primates</taxon>
        <taxon>Haplorrhini</taxon>
        <taxon>Catarrhini</taxon>
        <taxon>Hominidae</taxon>
        <taxon>Pongo</taxon>
    </lineage>
</organism>
<sequence>MVLLHVLFEHAVGYALLALKEVEEISLLQPQVEESVLNLGKFHNIVRLVAFCPFASSQVALENANAVSEGVVHEDLRLLLETHLPSKKKRVLLGVGDPKIGAAIQEELGYNCQTGGVIAEILRGVRLHFHNLVKGLTDLSACKAQLGLGHSYSRTKVKFNVNRVDNMIIQSISLLDQLDKDINTFSMRVREWYGYHFPELVKIINDNATYCRLAQFIGNRRELNEDKLEKLEELTMDGAKAKAILDASRSSMGMDISAIDLINIESFSSRVVSLSEYRQSLHTYLRSKMSQVAPSLSALIGEAVGARLIAHAGSLTNLAKYPASTVQILGAEKALFRALKTRGNTPKYGLIFHSTFIGRAAAKNKGRISRYLANKCSIASRIDCFSEVPTSVFGEKLREQVEERLSFYETGEIPRKNLDVMKEAMVQAEEAAAEITRKLEKQEKKRLKKEKKRLAALALASSENSSSTPEECEETSEKPKKKKKQKPQEVPQENGMEDPSISFSKPKKKKSFSKEELMSSDPEETAGSTSIPKKKKSSPKGETVNDPEEAGHRSGSKKKRKFSKEEPVSSGPEEAAGKSSSKKKKKFHKASQED</sequence>
<proteinExistence type="evidence at transcript level"/>
<dbReference type="EMBL" id="CR859194">
    <property type="protein sequence ID" value="CAH91381.1"/>
    <property type="molecule type" value="mRNA"/>
</dbReference>
<dbReference type="RefSeq" id="NP_001125816.1">
    <property type="nucleotide sequence ID" value="NM_001132344.2"/>
</dbReference>
<dbReference type="SMR" id="Q5RA29"/>
<dbReference type="FunCoup" id="Q5RA29">
    <property type="interactions" value="3063"/>
</dbReference>
<dbReference type="STRING" id="9601.ENSPPYP00000012104"/>
<dbReference type="GeneID" id="100172744"/>
<dbReference type="KEGG" id="pon:100172744"/>
<dbReference type="CTD" id="10528"/>
<dbReference type="eggNOG" id="KOG2573">
    <property type="taxonomic scope" value="Eukaryota"/>
</dbReference>
<dbReference type="InParanoid" id="Q5RA29"/>
<dbReference type="OrthoDB" id="6780543at2759"/>
<dbReference type="Proteomes" id="UP000001595">
    <property type="component" value="Unplaced"/>
</dbReference>
<dbReference type="GO" id="GO:0031428">
    <property type="term" value="C:box C/D methylation guide snoRNP complex"/>
    <property type="evidence" value="ECO:0000250"/>
    <property type="project" value="UniProtKB"/>
</dbReference>
<dbReference type="GO" id="GO:0005737">
    <property type="term" value="C:cytoplasm"/>
    <property type="evidence" value="ECO:0007669"/>
    <property type="project" value="UniProtKB-SubCell"/>
</dbReference>
<dbReference type="GO" id="GO:0005730">
    <property type="term" value="C:nucleolus"/>
    <property type="evidence" value="ECO:0007669"/>
    <property type="project" value="UniProtKB-SubCell"/>
</dbReference>
<dbReference type="GO" id="GO:0005654">
    <property type="term" value="C:nucleoplasm"/>
    <property type="evidence" value="ECO:0007669"/>
    <property type="project" value="UniProtKB-SubCell"/>
</dbReference>
<dbReference type="GO" id="GO:0032040">
    <property type="term" value="C:small-subunit processome"/>
    <property type="evidence" value="ECO:0000250"/>
    <property type="project" value="UniProtKB"/>
</dbReference>
<dbReference type="GO" id="GO:0030515">
    <property type="term" value="F:snoRNA binding"/>
    <property type="evidence" value="ECO:0007669"/>
    <property type="project" value="InterPro"/>
</dbReference>
<dbReference type="GO" id="GO:0042274">
    <property type="term" value="P:ribosomal small subunit biogenesis"/>
    <property type="evidence" value="ECO:0000250"/>
    <property type="project" value="UniProtKB"/>
</dbReference>
<dbReference type="FunFam" id="1.10.246.90:FF:000001">
    <property type="entry name" value="Nucleolar protein 56"/>
    <property type="match status" value="1"/>
</dbReference>
<dbReference type="FunFam" id="1.10.287.4070:FF:000002">
    <property type="entry name" value="Nucleolar protein 56"/>
    <property type="match status" value="1"/>
</dbReference>
<dbReference type="Gene3D" id="1.10.287.4070">
    <property type="match status" value="1"/>
</dbReference>
<dbReference type="Gene3D" id="1.10.246.90">
    <property type="entry name" value="Nop domain"/>
    <property type="match status" value="1"/>
</dbReference>
<dbReference type="InterPro" id="IPR045056">
    <property type="entry name" value="Nop56/Nop58"/>
</dbReference>
<dbReference type="InterPro" id="IPR012974">
    <property type="entry name" value="NOP58/56_N"/>
</dbReference>
<dbReference type="InterPro" id="IPR042239">
    <property type="entry name" value="Nop_C"/>
</dbReference>
<dbReference type="InterPro" id="IPR002687">
    <property type="entry name" value="Nop_dom"/>
</dbReference>
<dbReference type="InterPro" id="IPR036070">
    <property type="entry name" value="Nop_dom_sf"/>
</dbReference>
<dbReference type="InterPro" id="IPR012976">
    <property type="entry name" value="NOSIC"/>
</dbReference>
<dbReference type="PANTHER" id="PTHR10894">
    <property type="entry name" value="NUCLEOLAR PROTEIN 5 NUCLEOLAR PROTEIN NOP5 NOP58"/>
    <property type="match status" value="1"/>
</dbReference>
<dbReference type="PANTHER" id="PTHR10894:SF0">
    <property type="entry name" value="NUCLEOLAR PROTEIN 56"/>
    <property type="match status" value="1"/>
</dbReference>
<dbReference type="Pfam" id="PF01798">
    <property type="entry name" value="Nop"/>
    <property type="match status" value="1"/>
</dbReference>
<dbReference type="Pfam" id="PF08156">
    <property type="entry name" value="NOP5NT"/>
    <property type="match status" value="1"/>
</dbReference>
<dbReference type="SMART" id="SM00931">
    <property type="entry name" value="NOSIC"/>
    <property type="match status" value="1"/>
</dbReference>
<dbReference type="SUPFAM" id="SSF89124">
    <property type="entry name" value="Nop domain"/>
    <property type="match status" value="1"/>
</dbReference>
<dbReference type="PROSITE" id="PS51358">
    <property type="entry name" value="NOP"/>
    <property type="match status" value="1"/>
</dbReference>
<keyword id="KW-0007">Acetylation</keyword>
<keyword id="KW-0963">Cytoplasm</keyword>
<keyword id="KW-1017">Isopeptide bond</keyword>
<keyword id="KW-0488">Methylation</keyword>
<keyword id="KW-0539">Nucleus</keyword>
<keyword id="KW-0597">Phosphoprotein</keyword>
<keyword id="KW-1185">Reference proteome</keyword>
<keyword id="KW-0687">Ribonucleoprotein</keyword>
<keyword id="KW-0690">Ribosome biogenesis</keyword>
<keyword id="KW-0832">Ubl conjugation</keyword>
<protein>
    <recommendedName>
        <fullName>Nucleolar protein 56</fullName>
    </recommendedName>
    <alternativeName>
        <fullName>Nucleolar protein 5A</fullName>
    </alternativeName>
</protein>
<gene>
    <name type="primary">NOP56</name>
    <name type="synonym">NOL5A</name>
</gene>
<comment type="function">
    <text evidence="1">Involved in the early to middle stages of 60S ribosomal subunit biogenesis. Required for the biogenesis of box C/D snoRNAs such U3, U8 and U14 snoRNAs. Part of the small subunit (SSU) processome, first precursor of the small eukaryotic ribosomal subunit. During the assembly of the SSU processome in the nucleolus, many ribosome biogenesis factors, an RNA chaperone and ribosomal proteins associate with the nascent pre-rRNA and work in concert to generate RNA folding, modifications, rearrangements and cleavage as well as targeted degradation of pre-ribosomal RNA by the RNA exosome. Core component of box C/D small nucleolar ribonucleoprotein (snoRNP) complexes that function in methylation of multiple sites on ribosomal RNAs (rRNAs) and messenger RNAs (mRNAs).</text>
</comment>
<comment type="subunit">
    <text evidence="1">Part of a large pre-ribosomal ribonucleoprotein (RNP) complex, that consists of at least 62 ribosomal proteins, 45 nonribosomal proteins and both pre-rRNA and mature rRNA species. Within this complex directly interacts with TCOF1 in an RNA-independent manner. Core component of box C/D small nucleolar ribonucleoprotein (snoRNP) particles; the core proteins SNU13, NOP56, NOP58 and FBL or FBLL1 assemble stepwise onto the snoRNA. Interacts with NOP1 and NOP58. Interacts with NUFIP1, RUVBL1 and RUVBL2; RUVBL1:RUVBL2 seem to bridge the association of NOP56 with NUFIP1. Part of the small subunit (SSU) processome, composed of more than 70 proteins and the RNA chaperone small nucleolar RNA (snoRNA) U3. Interacts with NOP2 and FBL.</text>
</comment>
<comment type="subcellular location">
    <subcellularLocation>
        <location evidence="1">Nucleus</location>
        <location evidence="1">Nucleolus</location>
    </subcellularLocation>
    <subcellularLocation>
        <location evidence="2">Cytoplasm</location>
    </subcellularLocation>
    <subcellularLocation>
        <location evidence="1">Nucleus</location>
        <location evidence="1">Nucleoplasm</location>
    </subcellularLocation>
</comment>
<comment type="similarity">
    <text evidence="5">Belongs to the NOP5/NOP56 family.</text>
</comment>
<feature type="chain" id="PRO_0000219028" description="Nucleolar protein 56">
    <location>
        <begin position="1"/>
        <end position="594"/>
    </location>
</feature>
<feature type="domain" description="Nop" evidence="3">
    <location>
        <begin position="292"/>
        <end position="410"/>
    </location>
</feature>
<feature type="region of interest" description="Disordered" evidence="4">
    <location>
        <begin position="457"/>
        <end position="594"/>
    </location>
</feature>
<feature type="compositionally biased region" description="Low complexity" evidence="4">
    <location>
        <begin position="457"/>
        <end position="469"/>
    </location>
</feature>
<feature type="compositionally biased region" description="Basic residues" evidence="4">
    <location>
        <begin position="580"/>
        <end position="594"/>
    </location>
</feature>
<feature type="modified residue" description="Phosphoserine" evidence="1">
    <location>
        <position position="314"/>
    </location>
</feature>
<feature type="modified residue" description="Omega-N-methylarginine" evidence="1">
    <location>
        <position position="359"/>
    </location>
</feature>
<feature type="modified residue" description="Phosphoserine" evidence="2">
    <location>
        <position position="466"/>
    </location>
</feature>
<feature type="modified residue" description="Phosphoserine" evidence="2">
    <location>
        <position position="467"/>
    </location>
</feature>
<feature type="modified residue" description="Phosphothreonine" evidence="2">
    <location>
        <position position="468"/>
    </location>
</feature>
<feature type="modified residue" description="Phosphoserine" evidence="1">
    <location>
        <position position="511"/>
    </location>
</feature>
<feature type="modified residue" description="Phosphoserine" evidence="1">
    <location>
        <position position="519"/>
    </location>
</feature>
<feature type="modified residue" description="Phosphoserine" evidence="1">
    <location>
        <position position="520"/>
    </location>
</feature>
<feature type="modified residue" description="Phosphoserine" evidence="2">
    <location>
        <position position="537"/>
    </location>
</feature>
<feature type="modified residue" description="N6-acetyllysine" evidence="2">
    <location>
        <position position="561"/>
    </location>
</feature>
<feature type="modified residue" description="Phosphoserine" evidence="1">
    <location>
        <position position="563"/>
    </location>
</feature>
<feature type="modified residue" description="Phosphoserine" evidence="1">
    <location>
        <position position="569"/>
    </location>
</feature>
<feature type="modified residue" description="Phosphoserine" evidence="1">
    <location>
        <position position="570"/>
    </location>
</feature>
<feature type="modified residue" description="Phosphoserine" evidence="1">
    <location>
        <position position="579"/>
    </location>
</feature>
<feature type="modified residue" description="Phosphoserine" evidence="1">
    <location>
        <position position="581"/>
    </location>
</feature>
<feature type="cross-link" description="Glycyl lysine isopeptide (Lys-Gly) (interchain with G-Cter in SUMO2)" evidence="1">
    <location>
        <position position="87"/>
    </location>
</feature>
<feature type="cross-link" description="Glycyl lysine isopeptide (Lys-Gly) (interchain with G-Cter in SUMO2)" evidence="1">
    <location>
        <position position="230"/>
    </location>
</feature>
<feature type="cross-link" description="Glycyl lysine isopeptide (Lys-Gly) (interchain with G-Cter in SUMO2)" evidence="1">
    <location>
        <position position="240"/>
    </location>
</feature>
<feature type="cross-link" description="Glycyl lysine isopeptide (Lys-Gly) (interchain with G-Cter in SUMO2)" evidence="1">
    <location>
        <position position="540"/>
    </location>
</feature>
<feature type="cross-link" description="Glycyl lysine isopeptide (Lys-Gly) (interchain with G-Cter in SUMO2)" evidence="1">
    <location>
        <position position="564"/>
    </location>
</feature>
<accession>Q5RA29</accession>